<gene>
    <name evidence="5" type="primary">okaG</name>
</gene>
<evidence type="ECO:0000250" key="1">
    <source>
        <dbReference type="UniProtKB" id="P04798"/>
    </source>
</evidence>
<evidence type="ECO:0000255" key="2"/>
<evidence type="ECO:0000269" key="3">
    <source>
    </source>
</evidence>
<evidence type="ECO:0000269" key="4">
    <source>
    </source>
</evidence>
<evidence type="ECO:0000303" key="5">
    <source>
    </source>
</evidence>
<evidence type="ECO:0000305" key="6"/>
<accession>A0A2Z5U3C2</accession>
<keyword id="KW-0349">Heme</keyword>
<keyword id="KW-0408">Iron</keyword>
<keyword id="KW-0472">Membrane</keyword>
<keyword id="KW-0479">Metal-binding</keyword>
<keyword id="KW-0503">Monooxygenase</keyword>
<keyword id="KW-0560">Oxidoreductase</keyword>
<keyword id="KW-0812">Transmembrane</keyword>
<keyword id="KW-1133">Transmembrane helix</keyword>
<dbReference type="EC" id="1.14.14.-" evidence="3"/>
<dbReference type="EMBL" id="LC316945">
    <property type="protein sequence ID" value="BBB04333.1"/>
    <property type="molecule type" value="Genomic_DNA"/>
</dbReference>
<dbReference type="GO" id="GO:0016020">
    <property type="term" value="C:membrane"/>
    <property type="evidence" value="ECO:0007669"/>
    <property type="project" value="UniProtKB-SubCell"/>
</dbReference>
<dbReference type="GO" id="GO:0020037">
    <property type="term" value="F:heme binding"/>
    <property type="evidence" value="ECO:0007669"/>
    <property type="project" value="InterPro"/>
</dbReference>
<dbReference type="GO" id="GO:0005506">
    <property type="term" value="F:iron ion binding"/>
    <property type="evidence" value="ECO:0007669"/>
    <property type="project" value="InterPro"/>
</dbReference>
<dbReference type="GO" id="GO:0004497">
    <property type="term" value="F:monooxygenase activity"/>
    <property type="evidence" value="ECO:0007669"/>
    <property type="project" value="UniProtKB-KW"/>
</dbReference>
<dbReference type="GO" id="GO:0016705">
    <property type="term" value="F:oxidoreductase activity, acting on paired donors, with incorporation or reduction of molecular oxygen"/>
    <property type="evidence" value="ECO:0007669"/>
    <property type="project" value="InterPro"/>
</dbReference>
<dbReference type="GO" id="GO:0043386">
    <property type="term" value="P:mycotoxin biosynthetic process"/>
    <property type="evidence" value="ECO:0007669"/>
    <property type="project" value="UniProtKB-ARBA"/>
</dbReference>
<dbReference type="CDD" id="cd11041">
    <property type="entry name" value="CYP503A1-like"/>
    <property type="match status" value="1"/>
</dbReference>
<dbReference type="Gene3D" id="1.10.630.10">
    <property type="entry name" value="Cytochrome P450"/>
    <property type="match status" value="1"/>
</dbReference>
<dbReference type="InterPro" id="IPR001128">
    <property type="entry name" value="Cyt_P450"/>
</dbReference>
<dbReference type="InterPro" id="IPR017972">
    <property type="entry name" value="Cyt_P450_CS"/>
</dbReference>
<dbReference type="InterPro" id="IPR002403">
    <property type="entry name" value="Cyt_P450_E_grp-IV"/>
</dbReference>
<dbReference type="InterPro" id="IPR036396">
    <property type="entry name" value="Cyt_P450_sf"/>
</dbReference>
<dbReference type="PANTHER" id="PTHR46206">
    <property type="entry name" value="CYTOCHROME P450"/>
    <property type="match status" value="1"/>
</dbReference>
<dbReference type="PANTHER" id="PTHR46206:SF1">
    <property type="entry name" value="P450, PUTATIVE (EUROFUNG)-RELATED"/>
    <property type="match status" value="1"/>
</dbReference>
<dbReference type="Pfam" id="PF00067">
    <property type="entry name" value="p450"/>
    <property type="match status" value="1"/>
</dbReference>
<dbReference type="PRINTS" id="PR00465">
    <property type="entry name" value="EP450IV"/>
</dbReference>
<dbReference type="SUPFAM" id="SSF48264">
    <property type="entry name" value="Cytochrome P450"/>
    <property type="match status" value="1"/>
</dbReference>
<dbReference type="PROSITE" id="PS00086">
    <property type="entry name" value="CYTOCHROME_P450"/>
    <property type="match status" value="1"/>
</dbReference>
<proteinExistence type="evidence at protein level"/>
<name>OKAG_PENOH</name>
<feature type="chain" id="PRO_0000461559" description="Cytochrome P450 monooxygenase okaG">
    <location>
        <begin position="1"/>
        <end position="538"/>
    </location>
</feature>
<feature type="transmembrane region" description="Helical" evidence="2">
    <location>
        <begin position="3"/>
        <end position="23"/>
    </location>
</feature>
<feature type="binding site" description="axial binding residue" evidence="1">
    <location>
        <position position="484"/>
    </location>
    <ligand>
        <name>heme</name>
        <dbReference type="ChEBI" id="CHEBI:30413"/>
    </ligand>
    <ligandPart>
        <name>Fe</name>
        <dbReference type="ChEBI" id="CHEBI:18248"/>
    </ligandPart>
</feature>
<protein>
    <recommendedName>
        <fullName evidence="5">Cytochrome P450 monooxygenase okaG</fullName>
        <ecNumber evidence="3">1.14.14.-</ecNumber>
    </recommendedName>
    <alternativeName>
        <fullName evidence="5">Okaramines biosynthesis cluster protein G</fullName>
    </alternativeName>
</protein>
<organism>
    <name type="scientific">Penicillium ochrochloron</name>
    <dbReference type="NCBI Taxonomy" id="69780"/>
    <lineage>
        <taxon>Eukaryota</taxon>
        <taxon>Fungi</taxon>
        <taxon>Dikarya</taxon>
        <taxon>Ascomycota</taxon>
        <taxon>Pezizomycotina</taxon>
        <taxon>Eurotiomycetes</taxon>
        <taxon>Eurotiomycetidae</taxon>
        <taxon>Eurotiales</taxon>
        <taxon>Aspergillaceae</taxon>
        <taxon>Penicillium</taxon>
    </lineage>
</organism>
<reference key="1">
    <citation type="journal article" date="2018" name="ACS Chem. Biol.">
        <title>Biosynthesis and Structure-Activity Relationship Studies of Okaramines That Target Insect Glutamate-Gated Chloride Channels.</title>
        <authorList>
            <person name="Kato N."/>
            <person name="Furutani S."/>
            <person name="Otaka J."/>
            <person name="Noguchi A."/>
            <person name="Kinugasa K."/>
            <person name="Kai K."/>
            <person name="Hayashi H."/>
            <person name="Ihara M."/>
            <person name="Takahashi S."/>
            <person name="Matsuda K."/>
            <person name="Osada H."/>
        </authorList>
    </citation>
    <scope>NUCLEOTIDE SEQUENCE [GENOMIC DNA]</scope>
    <scope>FUNCTION</scope>
    <scope>DISRUPTION PHENOTYPE</scope>
    <scope>PATHWAY</scope>
    <source>
        <strain>ATCC 90288 / AK-40</strain>
    </source>
</reference>
<reference key="2">
    <citation type="journal article" date="2017" name="Angew. Chem. Int. Ed.">
        <title>Biosynthesis of Complex Indole Alkaloids: Elucidation of the Concise Pathway of Okaramines.</title>
        <authorList>
            <person name="Lai C.Y."/>
            <person name="Lo I.W."/>
            <person name="Hewage R.T."/>
            <person name="Chen Y.C."/>
            <person name="Chen C.T."/>
            <person name="Lee C.F."/>
            <person name="Lin S."/>
            <person name="Tang M.C."/>
            <person name="Lin H.C."/>
        </authorList>
    </citation>
    <scope>FUNCTION</scope>
    <scope>DISRUPTION PHENOTYPE</scope>
    <scope>CATALYTIC ACTIVITY</scope>
    <scope>PATHWAY</scope>
</reference>
<comment type="function">
    <text evidence="3 4">Nonribosomal peptide synthetase; part of the gene cluster that mediates the biosynthesis of okaramine B, a prenylated indole alkaloid that possesses an unusual octacyclic ring system, including a four-membered azetidine ring and an eight-membered azocine ring, and that exhibits insecticidal activity against silkworm larvae (PubMed:28631282, PubMed:29384650). Within the pathway, okaG acts as a 2,3-diol synthase that installs 2,3-diol on the okaramine scaffold to convert 12-deshydroxyl okaramine E into 3-desmethyl okaramine B (PubMed:28631282). OkaG is also able to produce use okaramine E and produce okaramine D with the help of the methyltransferase okaF (PubMed:28631282). The biosynthesis begins with the NRPS okaA that condenses two tryptophan molecules into cyclo(L-Trp-L-Trp). Prenylation by the prenyltransferase okaC then leads to the formation of cyclo(N8-(alpha,alpha-dimethylallyl)-L-Trp-6a-(alpha,alpha-dime-thylallyl)-L-Trp). This is followed by indole 2,3-epoxidation by the FAD-dependent monooxygenase okaB to facilitate the formation of the hexahydropyrrolo[2,3-b]indole (HPI) moiety of okaramine C. The cytochrome P450 monooxygenase okaD then likely catalyzes formation of the eight-membered ring of okaramine A. The dioxygenase okaE further forms the unusual 2-dimethyl-3-methyl-azetidine ring to yield 12-deshydroxyl okaramine E, as well as the hydroxylation of 12-deshydroxyl okaramine E to produce okaramine E. The cytochrome P450 monoxygenase okaG converts 12-deshydroxyl okaramine E into 3-desmethyl okaramine B which is further methylated by the methyltransferase okaF into okaramine B. In a shunt pathway, okaG and okaF together are also able to convert okaramine E into okaramine D (PubMed:28631282, PubMed:29384650). Okaramine H is produced by nonenzymatic conversion from okaramine A (PubMed:29384650).</text>
</comment>
<comment type="catalytic activity">
    <reaction evidence="3">
        <text>12-deshydroxyl okaramine E + 2 reduced [NADPH--hemoprotein reductase] + 2 O2 = 3-desmethyl okaramine B + 2 oxidized [NADPH--hemoprotein reductase] + 2 H2O + 2 H(+)</text>
        <dbReference type="Rhea" id="RHEA:82711"/>
        <dbReference type="Rhea" id="RHEA-COMP:11964"/>
        <dbReference type="Rhea" id="RHEA-COMP:11965"/>
        <dbReference type="ChEBI" id="CHEBI:15377"/>
        <dbReference type="ChEBI" id="CHEBI:15378"/>
        <dbReference type="ChEBI" id="CHEBI:15379"/>
        <dbReference type="ChEBI" id="CHEBI:57618"/>
        <dbReference type="ChEBI" id="CHEBI:58210"/>
        <dbReference type="ChEBI" id="CHEBI:232466"/>
        <dbReference type="ChEBI" id="CHEBI:232467"/>
    </reaction>
    <physiologicalReaction direction="left-to-right" evidence="3">
        <dbReference type="Rhea" id="RHEA:82712"/>
    </physiologicalReaction>
</comment>
<comment type="cofactor">
    <cofactor evidence="1">
        <name>heme</name>
        <dbReference type="ChEBI" id="CHEBI:30413"/>
    </cofactor>
</comment>
<comment type="pathway">
    <text evidence="3 4">Alkaloid biosynthesis.</text>
</comment>
<comment type="subcellular location">
    <subcellularLocation>
        <location evidence="2">Membrane</location>
        <topology evidence="2">Single-pass membrane protein</topology>
    </subcellularLocation>
</comment>
<comment type="disruption phenotype">
    <text evidence="3 4">Abolishes the production of okaramine B and leads to the accumulation of okaramine E and 12-deshydroxy okaramine E.</text>
</comment>
<comment type="similarity">
    <text evidence="6">Belongs to the cytochrome P450 family.</text>
</comment>
<sequence>MSLISPLAAVLSAMAIVLGLLFFPNMTPQPTLHPRVGWRKEKASTLRAALRSCYKLNDWALEGYNAYAKLNIPYVLPSFDRGPITIIPARLMRRLYTLPDTDLDIRMTQQETNQTRWVAWDKKPAEDTFVWDVLRKQITRNLRQLTPIVASEIELSFNRWWGTDKEWKSIDIWDSCWKIVTGGINTTLCGSPLCRDAEFLQSCQNHSLVLVAGAMAINGAPRLLQPIIGGLVWFVCAILFNTTMKRSKAVVQERLEKTAMLRAEPAYDWKPPQDAIQWIIDDLYASDNLTQLNVKTICFRLLLLNDVSIPSTSFSVQTLLLNLFAADPALGFLEALREECQTVYTESGGVWTYDALKKLKITESAIRESLRLSPVGGIGLHRTVVNPKGISLPDYRLNLPHGTVIASPIESIHYDDDIYPHANDYNAFRFADPEAVRAILDKLSSEPNSNISTGGPRDRESKSAASTANIDEAFLAFGIGKHICPGRFFVMVEMKLILAIILVHYDVKPVKFKPKLVDCLWLKVPWNSGTLVVRRRSN</sequence>